<name>Y796_METKA</name>
<evidence type="ECO:0000255" key="1">
    <source>
        <dbReference type="HAMAP-Rule" id="MF_01089"/>
    </source>
</evidence>
<keyword id="KW-1185">Reference proteome</keyword>
<organism>
    <name type="scientific">Methanopyrus kandleri (strain AV19 / DSM 6324 / JCM 9639 / NBRC 100938)</name>
    <dbReference type="NCBI Taxonomy" id="190192"/>
    <lineage>
        <taxon>Archaea</taxon>
        <taxon>Methanobacteriati</taxon>
        <taxon>Methanobacteriota</taxon>
        <taxon>Methanomada group</taxon>
        <taxon>Methanopyri</taxon>
        <taxon>Methanopyrales</taxon>
        <taxon>Methanopyraceae</taxon>
        <taxon>Methanopyrus</taxon>
    </lineage>
</organism>
<sequence>MRVYVDGEPVDVPEEATVRDALEAAGVSVPEDVTIAVFKGEQKVERETDRLRIMLETGDEELSLTVAVEDERMSEVCEELPGASVSWTTRDEVGLGPVDVSDLEFHTRRGVEVPPYTAILILPTNDPSEAYFLITKRRMAVEYICTDIHGRVTAGRELVDELRGGERVTHVEPVVERATERVVSRVTLDDGLEAGDRIITRVEIELEKNAPVSAEHLLNTLEMEEGRLRIKFRTDTFTSIEPRPFYDLPEENVDMRERGVVTVRNRGVDEGVVYVYRRDRTPVESHNVVGRVRRGMELLDVVAEGDRVLVETDPPRVNFVGLTVDEARELAEEFDVELEVNGDGDVVVDQEPRETLNVLKERKVRVEVVPEDEVIEIELYEDDAPRSVEYFRRVTKMLDRPVGRLKVHFAYADLGMIVFEGNEKLGKKLPPENNPKDRVEAGVLGVTNQAKPHAGLIGVRLEDSEEYGPTGETFEGTNVIGRVVEGLGRLREMDQSDMGRTVYVREVRGER</sequence>
<dbReference type="EMBL" id="AE009439">
    <property type="protein sequence ID" value="AAM02010.1"/>
    <property type="molecule type" value="Genomic_DNA"/>
</dbReference>
<dbReference type="RefSeq" id="WP_011019165.1">
    <property type="nucleotide sequence ID" value="NC_003551.1"/>
</dbReference>
<dbReference type="STRING" id="190192.MK0796"/>
<dbReference type="PaxDb" id="190192-MK0796"/>
<dbReference type="EnsemblBacteria" id="AAM02010">
    <property type="protein sequence ID" value="AAM02010"/>
    <property type="gene ID" value="MK0796"/>
</dbReference>
<dbReference type="GeneID" id="1476897"/>
<dbReference type="KEGG" id="mka:MK0796"/>
<dbReference type="PATRIC" id="fig|190192.8.peg.837"/>
<dbReference type="HOGENOM" id="CLU_533841_0_0_2"/>
<dbReference type="InParanoid" id="Q8TX79"/>
<dbReference type="OrthoDB" id="140355at2157"/>
<dbReference type="Proteomes" id="UP000001826">
    <property type="component" value="Chromosome"/>
</dbReference>
<dbReference type="HAMAP" id="MF_01089">
    <property type="entry name" value="UPF0288"/>
    <property type="match status" value="1"/>
</dbReference>
<dbReference type="InterPro" id="IPR029000">
    <property type="entry name" value="Cyclophilin-like_dom_sf"/>
</dbReference>
<dbReference type="InterPro" id="IPR016466">
    <property type="entry name" value="Methan_mark_3"/>
</dbReference>
<dbReference type="InterPro" id="IPR005543">
    <property type="entry name" value="PASTA_dom"/>
</dbReference>
<dbReference type="NCBIfam" id="TIGR03268">
    <property type="entry name" value="methan_mark_3"/>
    <property type="match status" value="1"/>
</dbReference>
<dbReference type="Pfam" id="PF03793">
    <property type="entry name" value="PASTA"/>
    <property type="match status" value="1"/>
</dbReference>
<dbReference type="PIRSF" id="PIRSF005852">
    <property type="entry name" value="UCP005852"/>
    <property type="match status" value="1"/>
</dbReference>
<dbReference type="SUPFAM" id="SSF50891">
    <property type="entry name" value="Cyclophilin-like"/>
    <property type="match status" value="1"/>
</dbReference>
<dbReference type="SUPFAM" id="SSF54184">
    <property type="entry name" value="Penicillin-binding protein 2x (pbp-2x), c-terminal domain"/>
    <property type="match status" value="1"/>
</dbReference>
<dbReference type="PROSITE" id="PS51178">
    <property type="entry name" value="PASTA"/>
    <property type="match status" value="1"/>
</dbReference>
<reference key="1">
    <citation type="journal article" date="2002" name="Proc. Natl. Acad. Sci. U.S.A.">
        <title>The complete genome of hyperthermophile Methanopyrus kandleri AV19 and monophyly of archaeal methanogens.</title>
        <authorList>
            <person name="Slesarev A.I."/>
            <person name="Mezhevaya K.V."/>
            <person name="Makarova K.S."/>
            <person name="Polushin N.N."/>
            <person name="Shcherbinina O.V."/>
            <person name="Shakhova V.V."/>
            <person name="Belova G.I."/>
            <person name="Aravind L."/>
            <person name="Natale D.A."/>
            <person name="Rogozin I.B."/>
            <person name="Tatusov R.L."/>
            <person name="Wolf Y.I."/>
            <person name="Stetter K.O."/>
            <person name="Malykh A.G."/>
            <person name="Koonin E.V."/>
            <person name="Kozyavkin S.A."/>
        </authorList>
    </citation>
    <scope>NUCLEOTIDE SEQUENCE [LARGE SCALE GENOMIC DNA]</scope>
    <source>
        <strain>AV19 / DSM 6324 / JCM 9639 / NBRC 100938</strain>
    </source>
</reference>
<accession>Q8TX79</accession>
<protein>
    <recommendedName>
        <fullName evidence="1">UPF0288 protein MK0796</fullName>
    </recommendedName>
</protein>
<gene>
    <name type="ordered locus">MK0796</name>
</gene>
<proteinExistence type="inferred from homology"/>
<feature type="chain" id="PRO_0000156052" description="UPF0288 protein MK0796">
    <location>
        <begin position="1"/>
        <end position="511"/>
    </location>
</feature>
<comment type="similarity">
    <text evidence="1">Belongs to the UPF0288 family.</text>
</comment>